<comment type="function">
    <text evidence="2 3">Involved in the uptake of ammonia (Probable). Implicated in aging.</text>
</comment>
<comment type="subcellular location">
    <subcellularLocation>
        <location evidence="3">Membrane</location>
        <topology evidence="3">Multi-pass membrane protein</topology>
    </subcellularLocation>
</comment>
<comment type="similarity">
    <text evidence="3">Belongs to the ammonia transporter channel (TC 1.A.11.2) family.</text>
</comment>
<organism>
    <name type="scientific">Caenorhabditis elegans</name>
    <dbReference type="NCBI Taxonomy" id="6239"/>
    <lineage>
        <taxon>Eukaryota</taxon>
        <taxon>Metazoa</taxon>
        <taxon>Ecdysozoa</taxon>
        <taxon>Nematoda</taxon>
        <taxon>Chromadorea</taxon>
        <taxon>Rhabditida</taxon>
        <taxon>Rhabditina</taxon>
        <taxon>Rhabditomorpha</taxon>
        <taxon>Rhabditoidea</taxon>
        <taxon>Rhabditidae</taxon>
        <taxon>Peloderinae</taxon>
        <taxon>Caenorhabditis</taxon>
    </lineage>
</organism>
<protein>
    <recommendedName>
        <fullName>Putative ammonium transporter 2</fullName>
    </recommendedName>
</protein>
<gene>
    <name type="primary">amt-2</name>
    <name type="ORF">F49E11.3</name>
</gene>
<accession>Q20605</accession>
<reference key="1">
    <citation type="journal article" date="1998" name="Science">
        <title>Genome sequence of the nematode C. elegans: a platform for investigating biology.</title>
        <authorList>
            <consortium name="The C. elegans sequencing consortium"/>
        </authorList>
    </citation>
    <scope>NUCLEOTIDE SEQUENCE [LARGE SCALE GENOMIC DNA]</scope>
    <source>
        <strain>Bristol N2</strain>
    </source>
</reference>
<reference key="2">
    <citation type="journal article" date="2007" name="Aging Cell">
        <title>Functional genomic approach to identify novel genes involved in the regulation of oxidative stress resistance and animal lifespan.</title>
        <authorList>
            <person name="Kim Y."/>
            <person name="Sun H."/>
        </authorList>
    </citation>
    <scope>FUNCTION</scope>
</reference>
<keyword id="KW-0924">Ammonia transport</keyword>
<keyword id="KW-0472">Membrane</keyword>
<keyword id="KW-1185">Reference proteome</keyword>
<keyword id="KW-0812">Transmembrane</keyword>
<keyword id="KW-1133">Transmembrane helix</keyword>
<keyword id="KW-0813">Transport</keyword>
<dbReference type="EMBL" id="Z70308">
    <property type="protein sequence ID" value="CAA94345.3"/>
    <property type="molecule type" value="Genomic_DNA"/>
</dbReference>
<dbReference type="PIR" id="T22433">
    <property type="entry name" value="T22433"/>
</dbReference>
<dbReference type="RefSeq" id="NP_502496.3">
    <property type="nucleotide sequence ID" value="NM_070095.4"/>
</dbReference>
<dbReference type="SMR" id="Q20605"/>
<dbReference type="FunCoup" id="Q20605">
    <property type="interactions" value="1"/>
</dbReference>
<dbReference type="STRING" id="6239.F49E11.3.1"/>
<dbReference type="TCDB" id="1.A.11.2.10">
    <property type="family name" value="the ammonium transporter channel (amt) family"/>
</dbReference>
<dbReference type="PaxDb" id="6239-F49E11.3"/>
<dbReference type="EnsemblMetazoa" id="F49E11.3.1">
    <property type="protein sequence ID" value="F49E11.3.1"/>
    <property type="gene ID" value="WBGene00000134"/>
</dbReference>
<dbReference type="GeneID" id="186047"/>
<dbReference type="KEGG" id="cel:CELE_F49E11.3"/>
<dbReference type="UCSC" id="F49E11.3">
    <property type="organism name" value="c. elegans"/>
</dbReference>
<dbReference type="AGR" id="WB:WBGene00000134"/>
<dbReference type="CTD" id="186047"/>
<dbReference type="WormBase" id="F49E11.3">
    <property type="protein sequence ID" value="CE45919"/>
    <property type="gene ID" value="WBGene00000134"/>
    <property type="gene designation" value="amt-2"/>
</dbReference>
<dbReference type="eggNOG" id="KOG0682">
    <property type="taxonomic scope" value="Eukaryota"/>
</dbReference>
<dbReference type="GeneTree" id="ENSGT00530000064546"/>
<dbReference type="HOGENOM" id="CLU_000445_33_1_1"/>
<dbReference type="InParanoid" id="Q20605"/>
<dbReference type="OMA" id="CAGSDVM"/>
<dbReference type="OrthoDB" id="534912at2759"/>
<dbReference type="PhylomeDB" id="Q20605"/>
<dbReference type="PRO" id="PR:Q20605"/>
<dbReference type="Proteomes" id="UP000001940">
    <property type="component" value="Chromosome IV"/>
</dbReference>
<dbReference type="Bgee" id="WBGene00000134">
    <property type="expression patterns" value="Expressed in pharyngeal muscle cell (C elegans) and 2 other cell types or tissues"/>
</dbReference>
<dbReference type="GO" id="GO:0005886">
    <property type="term" value="C:plasma membrane"/>
    <property type="evidence" value="ECO:0000318"/>
    <property type="project" value="GO_Central"/>
</dbReference>
<dbReference type="GO" id="GO:0008519">
    <property type="term" value="F:ammonium channel activity"/>
    <property type="evidence" value="ECO:0000318"/>
    <property type="project" value="GO_Central"/>
</dbReference>
<dbReference type="GO" id="GO:0097272">
    <property type="term" value="P:ammonium homeostasis"/>
    <property type="evidence" value="ECO:0000318"/>
    <property type="project" value="GO_Central"/>
</dbReference>
<dbReference type="GO" id="GO:0072488">
    <property type="term" value="P:ammonium transmembrane transport"/>
    <property type="evidence" value="ECO:0000318"/>
    <property type="project" value="GO_Central"/>
</dbReference>
<dbReference type="FunFam" id="1.10.3430.10:FF:000008">
    <property type="entry name" value="Ammonium transporter"/>
    <property type="match status" value="1"/>
</dbReference>
<dbReference type="Gene3D" id="1.10.3430.10">
    <property type="entry name" value="Ammonium transporter AmtB like domains"/>
    <property type="match status" value="1"/>
</dbReference>
<dbReference type="InterPro" id="IPR029020">
    <property type="entry name" value="Ammonium/urea_transptr"/>
</dbReference>
<dbReference type="InterPro" id="IPR001905">
    <property type="entry name" value="Ammonium_transpt"/>
</dbReference>
<dbReference type="InterPro" id="IPR018047">
    <property type="entry name" value="Ammonium_transpt_CS"/>
</dbReference>
<dbReference type="InterPro" id="IPR024041">
    <property type="entry name" value="NH4_transpt_AmtB-like_dom"/>
</dbReference>
<dbReference type="NCBIfam" id="TIGR00836">
    <property type="entry name" value="amt"/>
    <property type="match status" value="1"/>
</dbReference>
<dbReference type="PANTHER" id="PTHR11730">
    <property type="entry name" value="AMMONIUM TRANSPORTER"/>
    <property type="match status" value="1"/>
</dbReference>
<dbReference type="PANTHER" id="PTHR11730:SF58">
    <property type="entry name" value="AMMONIUM TRANSPORTER"/>
    <property type="match status" value="1"/>
</dbReference>
<dbReference type="Pfam" id="PF00909">
    <property type="entry name" value="Ammonium_transp"/>
    <property type="match status" value="1"/>
</dbReference>
<dbReference type="SUPFAM" id="SSF111352">
    <property type="entry name" value="Ammonium transporter"/>
    <property type="match status" value="1"/>
</dbReference>
<dbReference type="PROSITE" id="PS01219">
    <property type="entry name" value="AMMONIUM_TRANSP"/>
    <property type="match status" value="1"/>
</dbReference>
<proteinExistence type="inferred from homology"/>
<name>AMT2_CAEEL</name>
<sequence>MNTLQNLTLKMDRQPTIRMKPDKQLDCSLSQDDGVWMMASSFIIFTMTAGFGLLESGRVSSKDEVNCMVKNVFDVIFGGLAYWMFGYGLTFGDSKHQLGRYVGFGDFFFDPERVSDDDSTDEKGISYSLFIFQMSFATTTSTIVSAGMSERIHLKSHCFISFFITLVHSVAGHWVWDQEGVFRMMGVVDSAGCSAVHLVGGVSGLVATLYLKPRRNRFAKNGIRTVSDPTKAILGFLMIWWGWLAFNTSSNYAVTHGQWTEGMRSAVGTILASAGGGVVTVIITRLSTKKIQMDMLIDGMLASLVASTGGCLYFTPWQATLVGAIGSSLALAAYPVTEWLKIDDPVGVFPVHVVGSIWGMIAPAIFVYRRPMNFGPPECDFQTSDEINGLLYGGGFYLLFLQSFVILVIGTYSAICAFIILFLIHHSPVGLRVDKYTEELGADLIEHGLAGFNVMTYTIEKKLDTKTLSAVLMIIVRWRAKAKLGAQRRKKIHDSGSVAPQQAESVEMNVIHRRH</sequence>
<evidence type="ECO:0000255" key="1"/>
<evidence type="ECO:0000269" key="2">
    <source>
    </source>
</evidence>
<evidence type="ECO:0000305" key="3"/>
<feature type="chain" id="PRO_0000139752" description="Putative ammonium transporter 2">
    <location>
        <begin position="1"/>
        <end position="515"/>
    </location>
</feature>
<feature type="transmembrane region" description="Helical" evidence="1">
    <location>
        <begin position="34"/>
        <end position="54"/>
    </location>
</feature>
<feature type="transmembrane region" description="Helical" evidence="1">
    <location>
        <begin position="72"/>
        <end position="92"/>
    </location>
</feature>
<feature type="transmembrane region" description="Helical" evidence="1">
    <location>
        <begin position="124"/>
        <end position="144"/>
    </location>
</feature>
<feature type="transmembrane region" description="Helical" evidence="1">
    <location>
        <begin position="156"/>
        <end position="176"/>
    </location>
</feature>
<feature type="transmembrane region" description="Helical" evidence="1">
    <location>
        <begin position="191"/>
        <end position="211"/>
    </location>
</feature>
<feature type="transmembrane region" description="Helical" evidence="1">
    <location>
        <begin position="226"/>
        <end position="246"/>
    </location>
</feature>
<feature type="transmembrane region" description="Helical" evidence="1">
    <location>
        <begin position="266"/>
        <end position="286"/>
    </location>
</feature>
<feature type="transmembrane region" description="Helical" evidence="1">
    <location>
        <begin position="291"/>
        <end position="311"/>
    </location>
</feature>
<feature type="transmembrane region" description="Helical" evidence="1">
    <location>
        <begin position="321"/>
        <end position="337"/>
    </location>
</feature>
<feature type="transmembrane region" description="Helical" evidence="1">
    <location>
        <begin position="346"/>
        <end position="366"/>
    </location>
</feature>
<feature type="transmembrane region" description="Helical" evidence="1">
    <location>
        <begin position="381"/>
        <end position="401"/>
    </location>
</feature>
<feature type="transmembrane region" description="Helical" evidence="1">
    <location>
        <begin position="404"/>
        <end position="424"/>
    </location>
</feature>